<reference key="1">
    <citation type="journal article" date="1999" name="Nature">
        <title>Sequence and analysis of chromosome 2 of the plant Arabidopsis thaliana.</title>
        <authorList>
            <person name="Lin X."/>
            <person name="Kaul S."/>
            <person name="Rounsley S.D."/>
            <person name="Shea T.P."/>
            <person name="Benito M.-I."/>
            <person name="Town C.D."/>
            <person name="Fujii C.Y."/>
            <person name="Mason T.M."/>
            <person name="Bowman C.L."/>
            <person name="Barnstead M.E."/>
            <person name="Feldblyum T.V."/>
            <person name="Buell C.R."/>
            <person name="Ketchum K.A."/>
            <person name="Lee J.J."/>
            <person name="Ronning C.M."/>
            <person name="Koo H.L."/>
            <person name="Moffat K.S."/>
            <person name="Cronin L.A."/>
            <person name="Shen M."/>
            <person name="Pai G."/>
            <person name="Van Aken S."/>
            <person name="Umayam L."/>
            <person name="Tallon L.J."/>
            <person name="Gill J.E."/>
            <person name="Adams M.D."/>
            <person name="Carrera A.J."/>
            <person name="Creasy T.H."/>
            <person name="Goodman H.M."/>
            <person name="Somerville C.R."/>
            <person name="Copenhaver G.P."/>
            <person name="Preuss D."/>
            <person name="Nierman W.C."/>
            <person name="White O."/>
            <person name="Eisen J.A."/>
            <person name="Salzberg S.L."/>
            <person name="Fraser C.M."/>
            <person name="Venter J.C."/>
        </authorList>
    </citation>
    <scope>NUCLEOTIDE SEQUENCE [LARGE SCALE GENOMIC DNA]</scope>
    <source>
        <strain>cv. Columbia</strain>
    </source>
</reference>
<reference key="2">
    <citation type="journal article" date="2017" name="Plant J.">
        <title>Araport11: a complete reannotation of the Arabidopsis thaliana reference genome.</title>
        <authorList>
            <person name="Cheng C.Y."/>
            <person name="Krishnakumar V."/>
            <person name="Chan A.P."/>
            <person name="Thibaud-Nissen F."/>
            <person name="Schobel S."/>
            <person name="Town C.D."/>
        </authorList>
    </citation>
    <scope>GENOME REANNOTATION</scope>
    <source>
        <strain>cv. Columbia</strain>
    </source>
</reference>
<reference key="3">
    <citation type="submission" date="2005-05" db="EMBL/GenBank/DDBJ databases">
        <authorList>
            <person name="Underwood B.A."/>
            <person name="Xiao Y.-L."/>
            <person name="Moskal W.A. Jr."/>
            <person name="Monaghan E.L."/>
            <person name="Wang W."/>
            <person name="Redman J.C."/>
            <person name="Wu H.C."/>
            <person name="Utterback T."/>
            <person name="Town C.D."/>
        </authorList>
    </citation>
    <scope>NUCLEOTIDE SEQUENCE [LARGE SCALE MRNA]</scope>
    <source>
        <strain>cv. Columbia</strain>
    </source>
</reference>
<reference key="4">
    <citation type="journal article" date="2003" name="Plant Physiol.">
        <title>Members of the Arabidopsis-SKP1-like gene family exhibit a variety of expression patterns and may play diverse roles in Arabidopsis.</title>
        <authorList>
            <person name="Zhao D."/>
            <person name="Ni W."/>
            <person name="Feng B."/>
            <person name="Han T."/>
            <person name="Petrasek M.G."/>
            <person name="Ma H."/>
        </authorList>
    </citation>
    <scope>GENE FAMILY</scope>
    <scope>NOMENCLATURE</scope>
    <scope>TISSUE SPECIFICITY</scope>
    <scope>DEVELOPMENTAL STAGE</scope>
</reference>
<reference key="5">
    <citation type="journal article" date="2009" name="Plant J.">
        <title>An F-box gene, CPR30, functions as a negative regulator of the defense response in Arabidopsis.</title>
        <authorList>
            <person name="Gou M."/>
            <person name="Su N."/>
            <person name="Zheng J."/>
            <person name="Huai J."/>
            <person name="Wu G."/>
            <person name="Zhao J."/>
            <person name="He J."/>
            <person name="Tang D."/>
            <person name="Yang S."/>
            <person name="Wang G."/>
        </authorList>
    </citation>
    <scope>INTERACTION WITH CPR1/CPR30</scope>
</reference>
<evidence type="ECO:0000250" key="1"/>
<evidence type="ECO:0000256" key="2">
    <source>
        <dbReference type="SAM" id="MobiDB-lite"/>
    </source>
</evidence>
<evidence type="ECO:0000269" key="3">
    <source>
    </source>
</evidence>
<evidence type="ECO:0000269" key="4">
    <source>
    </source>
</evidence>
<evidence type="ECO:0000305" key="5"/>
<name>ASK19_ARATH</name>
<keyword id="KW-0539">Nucleus</keyword>
<keyword id="KW-1185">Reference proteome</keyword>
<keyword id="KW-0833">Ubl conjugation pathway</keyword>
<dbReference type="EMBL" id="AC005313">
    <property type="protein sequence ID" value="AAC34486.1"/>
    <property type="molecule type" value="Genomic_DNA"/>
</dbReference>
<dbReference type="EMBL" id="CP002685">
    <property type="protein sequence ID" value="AEC05670.1"/>
    <property type="molecule type" value="Genomic_DNA"/>
</dbReference>
<dbReference type="EMBL" id="DQ056525">
    <property type="protein sequence ID" value="AAY78681.1"/>
    <property type="molecule type" value="mRNA"/>
</dbReference>
<dbReference type="PIR" id="T02710">
    <property type="entry name" value="T02710"/>
</dbReference>
<dbReference type="RefSeq" id="NP_565295.1">
    <property type="nucleotide sequence ID" value="NM_126367.1"/>
</dbReference>
<dbReference type="SMR" id="O81058"/>
<dbReference type="BioGRID" id="247">
    <property type="interactions" value="29"/>
</dbReference>
<dbReference type="ComplexPortal" id="CPX-1446">
    <property type="entry name" value="SCF(COI1) ubiquitin ligase complex, variant CUL1-RBX1A-ASK19"/>
</dbReference>
<dbReference type="ComplexPortal" id="CPX-1467">
    <property type="entry name" value="SCF(COI1) ubiquitin ligase complex, variant CUL1-RBX1B-ASK19"/>
</dbReference>
<dbReference type="ComplexPortal" id="CPX-1489">
    <property type="entry name" value="SCF(COI1) ubiquitin ligase complex, variant CUL2-RBX1A-ASK19"/>
</dbReference>
<dbReference type="ComplexPortal" id="CPX-1512">
    <property type="entry name" value="SCF(COI1) ubiquitin ligase complex, variant CUL2-RBX1B-ASK19"/>
</dbReference>
<dbReference type="ComplexPortal" id="CPX-1532">
    <property type="entry name" value="SCF(TIR1) ubiquitin ligase complex, variant CUL1-RBX1A-ASK19"/>
</dbReference>
<dbReference type="ComplexPortal" id="CPX-1553">
    <property type="entry name" value="SCF(TIR1) ubiquitin ligase complex, variant CUL1-RBX1B-ASK19"/>
</dbReference>
<dbReference type="ComplexPortal" id="CPX-1575">
    <property type="entry name" value="SCF(TIR1) ubiquitin ligase complex, variant CUL2-RBX1A-ASK19"/>
</dbReference>
<dbReference type="ComplexPortal" id="CPX-1596">
    <property type="entry name" value="SCF(TIR1) ubiquitin ligase complex, variant CUL2-RBX1B-ASK19"/>
</dbReference>
<dbReference type="FunCoup" id="O81058">
    <property type="interactions" value="362"/>
</dbReference>
<dbReference type="IntAct" id="O81058">
    <property type="interactions" value="11"/>
</dbReference>
<dbReference type="STRING" id="3702.O81058"/>
<dbReference type="iPTMnet" id="O81058"/>
<dbReference type="PaxDb" id="3702-AT2G03160.1"/>
<dbReference type="EnsemblPlants" id="AT2G03160.1">
    <property type="protein sequence ID" value="AT2G03160.1"/>
    <property type="gene ID" value="AT2G03160"/>
</dbReference>
<dbReference type="GeneID" id="814845"/>
<dbReference type="Gramene" id="AT2G03160.1">
    <property type="protein sequence ID" value="AT2G03160.1"/>
    <property type="gene ID" value="AT2G03160"/>
</dbReference>
<dbReference type="KEGG" id="ath:AT2G03160"/>
<dbReference type="Araport" id="AT2G03160"/>
<dbReference type="TAIR" id="AT2G03160">
    <property type="gene designation" value="SK19"/>
</dbReference>
<dbReference type="eggNOG" id="KOG1724">
    <property type="taxonomic scope" value="Eukaryota"/>
</dbReference>
<dbReference type="HOGENOM" id="CLU_059252_6_1_1"/>
<dbReference type="InParanoid" id="O81058"/>
<dbReference type="OMA" id="VVETHES"/>
<dbReference type="PhylomeDB" id="O81058"/>
<dbReference type="UniPathway" id="UPA00143"/>
<dbReference type="PRO" id="PR:O81058"/>
<dbReference type="Proteomes" id="UP000006548">
    <property type="component" value="Chromosome 2"/>
</dbReference>
<dbReference type="ExpressionAtlas" id="O81058">
    <property type="expression patterns" value="baseline and differential"/>
</dbReference>
<dbReference type="GO" id="GO:0005634">
    <property type="term" value="C:nucleus"/>
    <property type="evidence" value="ECO:0007669"/>
    <property type="project" value="UniProtKB-SubCell"/>
</dbReference>
<dbReference type="GO" id="GO:0019005">
    <property type="term" value="C:SCF ubiquitin ligase complex"/>
    <property type="evidence" value="ECO:0000250"/>
    <property type="project" value="ComplexPortal"/>
</dbReference>
<dbReference type="GO" id="GO:0009734">
    <property type="term" value="P:auxin-activated signaling pathway"/>
    <property type="evidence" value="ECO:0000303"/>
    <property type="project" value="ComplexPortal"/>
</dbReference>
<dbReference type="GO" id="GO:0009867">
    <property type="term" value="P:jasmonic acid mediated signaling pathway"/>
    <property type="evidence" value="ECO:0000315"/>
    <property type="project" value="ComplexPortal"/>
</dbReference>
<dbReference type="GO" id="GO:0016567">
    <property type="term" value="P:protein ubiquitination"/>
    <property type="evidence" value="ECO:0000250"/>
    <property type="project" value="TAIR"/>
</dbReference>
<dbReference type="GO" id="GO:0009733">
    <property type="term" value="P:response to auxin"/>
    <property type="evidence" value="ECO:0000303"/>
    <property type="project" value="ComplexPortal"/>
</dbReference>
<dbReference type="GO" id="GO:0009753">
    <property type="term" value="P:response to jasmonic acid"/>
    <property type="evidence" value="ECO:0000315"/>
    <property type="project" value="ComplexPortal"/>
</dbReference>
<dbReference type="GO" id="GO:0006511">
    <property type="term" value="P:ubiquitin-dependent protein catabolic process"/>
    <property type="evidence" value="ECO:0007669"/>
    <property type="project" value="InterPro"/>
</dbReference>
<dbReference type="CDD" id="cd18322">
    <property type="entry name" value="BTB_POZ_SKP1"/>
    <property type="match status" value="1"/>
</dbReference>
<dbReference type="Gene3D" id="3.30.710.10">
    <property type="entry name" value="Potassium Channel Kv1.1, Chain A"/>
    <property type="match status" value="1"/>
</dbReference>
<dbReference type="InterPro" id="IPR016897">
    <property type="entry name" value="SKP1"/>
</dbReference>
<dbReference type="InterPro" id="IPR001232">
    <property type="entry name" value="SKP1-like"/>
</dbReference>
<dbReference type="InterPro" id="IPR036296">
    <property type="entry name" value="SKP1-like_dim_sf"/>
</dbReference>
<dbReference type="InterPro" id="IPR011333">
    <property type="entry name" value="SKP1/BTB/POZ_sf"/>
</dbReference>
<dbReference type="InterPro" id="IPR016072">
    <property type="entry name" value="Skp1_comp_dimer"/>
</dbReference>
<dbReference type="InterPro" id="IPR016073">
    <property type="entry name" value="Skp1_comp_POZ"/>
</dbReference>
<dbReference type="PANTHER" id="PTHR11165">
    <property type="entry name" value="SKP1"/>
    <property type="match status" value="1"/>
</dbReference>
<dbReference type="Pfam" id="PF01466">
    <property type="entry name" value="Skp1"/>
    <property type="match status" value="1"/>
</dbReference>
<dbReference type="Pfam" id="PF03931">
    <property type="entry name" value="Skp1_POZ"/>
    <property type="match status" value="1"/>
</dbReference>
<dbReference type="PIRSF" id="PIRSF028729">
    <property type="entry name" value="E3_ubiquit_lig_SCF_Skp"/>
    <property type="match status" value="1"/>
</dbReference>
<dbReference type="SMART" id="SM00512">
    <property type="entry name" value="Skp1"/>
    <property type="match status" value="1"/>
</dbReference>
<dbReference type="SUPFAM" id="SSF54695">
    <property type="entry name" value="POZ domain"/>
    <property type="match status" value="1"/>
</dbReference>
<dbReference type="SUPFAM" id="SSF81382">
    <property type="entry name" value="Skp1 dimerisation domain-like"/>
    <property type="match status" value="1"/>
</dbReference>
<protein>
    <recommendedName>
        <fullName>SKP1-like protein 19</fullName>
        <shortName>AtSK19</shortName>
    </recommendedName>
</protein>
<proteinExistence type="evidence at protein level"/>
<organism>
    <name type="scientific">Arabidopsis thaliana</name>
    <name type="common">Mouse-ear cress</name>
    <dbReference type="NCBI Taxonomy" id="3702"/>
    <lineage>
        <taxon>Eukaryota</taxon>
        <taxon>Viridiplantae</taxon>
        <taxon>Streptophyta</taxon>
        <taxon>Embryophyta</taxon>
        <taxon>Tracheophyta</taxon>
        <taxon>Spermatophyta</taxon>
        <taxon>Magnoliopsida</taxon>
        <taxon>eudicotyledons</taxon>
        <taxon>Gunneridae</taxon>
        <taxon>Pentapetalae</taxon>
        <taxon>rosids</taxon>
        <taxon>malvids</taxon>
        <taxon>Brassicales</taxon>
        <taxon>Brassicaceae</taxon>
        <taxon>Camelineae</taxon>
        <taxon>Arabidopsis</taxon>
    </lineage>
</organism>
<comment type="function">
    <text evidence="1">Involved in ubiquitination and subsequent proteasomal degradation of target proteins. Together with CUL1, RBX1 and a F-box protein, it forms a SCF E3 ubiquitin ligase complex. The functional specificity of this complex depends on the type of F-box protein. In the SCF complex, it serves as an adapter that links the F-box protein to CUL1 (By similarity).</text>
</comment>
<comment type="pathway">
    <text>Protein modification; protein ubiquitination.</text>
</comment>
<comment type="subunit">
    <text evidence="1 4">Part of a SCF (SKP1-cullin-F-box) protein ligase complex (By similarity). Interacts with CPR1/CPR30.</text>
</comment>
<comment type="subcellular location">
    <subcellularLocation>
        <location evidence="1">Nucleus</location>
    </subcellularLocation>
</comment>
<comment type="tissue specificity">
    <text evidence="3">Expressed in leaves and flowers.</text>
</comment>
<comment type="developmental stage">
    <text evidence="3">Expressed at low levels in the inflorescence meristem (IM) and young flowers. Later confined to sepals, petals and stamen filaments. Detectable in the valve and seed coat.</text>
</comment>
<comment type="similarity">
    <text evidence="5">Belongs to the SKP1 family.</text>
</comment>
<feature type="chain" id="PRO_0000375260" description="SKP1-like protein 19">
    <location>
        <begin position="1"/>
        <end position="200"/>
    </location>
</feature>
<feature type="region of interest" description="Disordered" evidence="2">
    <location>
        <begin position="67"/>
        <end position="109"/>
    </location>
</feature>
<feature type="region of interest" description="Interaction with the F-box domain of F-box proteins" evidence="1">
    <location>
        <begin position="132"/>
        <end position="190"/>
    </location>
</feature>
<feature type="compositionally biased region" description="Basic and acidic residues" evidence="2">
    <location>
        <begin position="67"/>
        <end position="92"/>
    </location>
</feature>
<accession>O81058</accession>
<gene>
    <name type="primary">ASK19</name>
    <name type="ordered locus">At2g03160</name>
    <name type="ORF">T18E12.17</name>
</gene>
<sequence>MSSKKIVLTSSDGESFKVEEVVARKLQIVGHIIEDDCATNKIPIPNVTGEILAKVIEYCKKHVEDDDDVVETHESSTKGDKTVEEAKKKPDDVAVPESTEGDDEAEDKKEKLNEWDAKFMKDFDIKTIFDIILAANYLNVQGLFDLCSKTIADYIKDMTPEEVRELFNIENDFTPEEEEAIRNENAWTFEQDGKQQVPKP</sequence>